<protein>
    <recommendedName>
        <fullName>Zinc finger protein 503</fullName>
    </recommendedName>
    <alternativeName>
        <fullName>NocA-like zinc finger protein 2</fullName>
    </alternativeName>
</protein>
<comment type="function">
    <text evidence="3 4">Required for segmental gene expression during hindbrain development. May function as a transcriptional repressor.</text>
</comment>
<comment type="subunit">
    <text evidence="3">Interacts with nlz1.</text>
</comment>
<comment type="subcellular location">
    <subcellularLocation>
        <location evidence="3">Nucleus</location>
    </subcellularLocation>
</comment>
<comment type="developmental stage">
    <text evidence="3 4">Detected in blastomere, near the blastoderm margin in gastrula, and in forebrain, posterior hindbrain and throughout the length of the trunk at early segmentation stages.</text>
</comment>
<comment type="similarity">
    <text evidence="5">Belongs to the Elbow/Noc family.</text>
</comment>
<gene>
    <name type="primary">znf503</name>
    <name type="synonym">nlz2</name>
</gene>
<accession>Q6UFS5</accession>
<accession>Q803U2</accession>
<proteinExistence type="evidence at protein level"/>
<keyword id="KW-0217">Developmental protein</keyword>
<keyword id="KW-0479">Metal-binding</keyword>
<keyword id="KW-0539">Nucleus</keyword>
<keyword id="KW-1185">Reference proteome</keyword>
<keyword id="KW-0678">Repressor</keyword>
<keyword id="KW-0804">Transcription</keyword>
<keyword id="KW-0805">Transcription regulation</keyword>
<keyword id="KW-0862">Zinc</keyword>
<keyword id="KW-0863">Zinc-finger</keyword>
<organism>
    <name type="scientific">Danio rerio</name>
    <name type="common">Zebrafish</name>
    <name type="synonym">Brachydanio rerio</name>
    <dbReference type="NCBI Taxonomy" id="7955"/>
    <lineage>
        <taxon>Eukaryota</taxon>
        <taxon>Metazoa</taxon>
        <taxon>Chordata</taxon>
        <taxon>Craniata</taxon>
        <taxon>Vertebrata</taxon>
        <taxon>Euteleostomi</taxon>
        <taxon>Actinopterygii</taxon>
        <taxon>Neopterygii</taxon>
        <taxon>Teleostei</taxon>
        <taxon>Ostariophysi</taxon>
        <taxon>Cypriniformes</taxon>
        <taxon>Danionidae</taxon>
        <taxon>Danioninae</taxon>
        <taxon>Danio</taxon>
    </lineage>
</organism>
<evidence type="ECO:0000255" key="1">
    <source>
        <dbReference type="PROSITE-ProRule" id="PRU00042"/>
    </source>
</evidence>
<evidence type="ECO:0000256" key="2">
    <source>
        <dbReference type="SAM" id="MobiDB-lite"/>
    </source>
</evidence>
<evidence type="ECO:0000269" key="3">
    <source>
    </source>
</evidence>
<evidence type="ECO:0000269" key="4">
    <source>
    </source>
</evidence>
<evidence type="ECO:0000305" key="5"/>
<dbReference type="EMBL" id="AY371081">
    <property type="protein sequence ID" value="AAQ72694.1"/>
    <property type="molecule type" value="mRNA"/>
</dbReference>
<dbReference type="EMBL" id="BC044193">
    <property type="protein sequence ID" value="AAH44193.1"/>
    <property type="molecule type" value="mRNA"/>
</dbReference>
<dbReference type="RefSeq" id="NP_942137.1">
    <property type="nucleotide sequence ID" value="NM_198840.3"/>
</dbReference>
<dbReference type="FunCoup" id="Q6UFS5">
    <property type="interactions" value="1572"/>
</dbReference>
<dbReference type="STRING" id="7955.ENSDARP00000019426"/>
<dbReference type="PaxDb" id="7955-ENSDARP00000019426"/>
<dbReference type="Ensembl" id="ENSDART00000008906">
    <property type="protein sequence ID" value="ENSDARP00000019426"/>
    <property type="gene ID" value="ENSDARG00000018492"/>
</dbReference>
<dbReference type="GeneID" id="324913"/>
<dbReference type="KEGG" id="dre:324913"/>
<dbReference type="AGR" id="ZFIN:ZDB-GENE-031113-5"/>
<dbReference type="CTD" id="84858"/>
<dbReference type="ZFIN" id="ZDB-GENE-031113-5">
    <property type="gene designation" value="znf503"/>
</dbReference>
<dbReference type="eggNOG" id="ENOG502QUYV">
    <property type="taxonomic scope" value="Eukaryota"/>
</dbReference>
<dbReference type="HOGENOM" id="CLU_035082_1_0_1"/>
<dbReference type="InParanoid" id="Q6UFS5"/>
<dbReference type="OMA" id="SDICVAW"/>
<dbReference type="OrthoDB" id="10054079at2759"/>
<dbReference type="PhylomeDB" id="Q6UFS5"/>
<dbReference type="TreeFam" id="TF324968"/>
<dbReference type="PRO" id="PR:Q6UFS5"/>
<dbReference type="Proteomes" id="UP000000437">
    <property type="component" value="Chromosome 13"/>
</dbReference>
<dbReference type="Bgee" id="ENSDARG00000018492">
    <property type="expression patterns" value="Expressed in muscle tissue and 54 other cell types or tissues"/>
</dbReference>
<dbReference type="GO" id="GO:0005634">
    <property type="term" value="C:nucleus"/>
    <property type="evidence" value="ECO:0000314"/>
    <property type="project" value="ZFIN"/>
</dbReference>
<dbReference type="GO" id="GO:0008270">
    <property type="term" value="F:zinc ion binding"/>
    <property type="evidence" value="ECO:0007669"/>
    <property type="project" value="UniProtKB-KW"/>
</dbReference>
<dbReference type="GO" id="GO:0048596">
    <property type="term" value="P:embryonic camera-type eye morphogenesis"/>
    <property type="evidence" value="ECO:0000315"/>
    <property type="project" value="ZFIN"/>
</dbReference>
<dbReference type="GO" id="GO:0030902">
    <property type="term" value="P:hindbrain development"/>
    <property type="evidence" value="ECO:0000316"/>
    <property type="project" value="ZFIN"/>
</dbReference>
<dbReference type="GO" id="GO:0045892">
    <property type="term" value="P:negative regulation of DNA-templated transcription"/>
    <property type="evidence" value="ECO:0000318"/>
    <property type="project" value="GO_Central"/>
</dbReference>
<dbReference type="FunFam" id="3.30.160.60:FF:000129">
    <property type="entry name" value="Zinc finger protein 503"/>
    <property type="match status" value="1"/>
</dbReference>
<dbReference type="Gene3D" id="3.30.160.60">
    <property type="entry name" value="Classic Zinc Finger"/>
    <property type="match status" value="1"/>
</dbReference>
<dbReference type="InterPro" id="IPR051520">
    <property type="entry name" value="Elbow/Noc_ZnFinger"/>
</dbReference>
<dbReference type="InterPro" id="IPR022129">
    <property type="entry name" value="Tscrpt_rep_NocA-like"/>
</dbReference>
<dbReference type="InterPro" id="IPR013087">
    <property type="entry name" value="Znf_C2H2_type"/>
</dbReference>
<dbReference type="PANTHER" id="PTHR12522:SF3">
    <property type="entry name" value="ZINC FINGER PROTEIN 503"/>
    <property type="match status" value="1"/>
</dbReference>
<dbReference type="PANTHER" id="PTHR12522">
    <property type="entry name" value="ZINC-FINGER PROTEIN NOLZ1-RELATED"/>
    <property type="match status" value="1"/>
</dbReference>
<dbReference type="Pfam" id="PF12402">
    <property type="entry name" value="nlz1"/>
    <property type="match status" value="1"/>
</dbReference>
<dbReference type="PROSITE" id="PS50157">
    <property type="entry name" value="ZINC_FINGER_C2H2_2"/>
    <property type="match status" value="1"/>
</dbReference>
<sequence length="563" mass="57925">MITSPSASRNSDTDLVWESSSSSSRNNSSAVASKPFLHSVPPSDPLRQANRLPIKILKMLTARTGHILHPEYLQPLPSTPVSPIELDAKKSPLALLAQTCSQIGKPDPPPSSKLSSVTSNGSSEKESKSGPLKLSDIGVEDKSSFKPYSKPADKKDSSSGVSSGEKSGFRVPSATCQPFTPRTGSPNSSTSASPMPSDGKGERDEKKDSDCNKNCSSDGSAPTSVSHSRISVSCAGINVEVNQHQETTSGSKASATSDSVSCVTSSSSASVLGSGLVAPVSPYKPGQTVFPLPPAGMTYPGSLAGAYAGYPQHFLPHGGSLVNAQLASSLGCSKAGSSPLAGASPPSIMSASLCRDPYCLSYHCASHLAGAAGASCTHDSAAAAAASALKSGYPLMYPTHPLHGVHSSPPSFGGHPLYPYGFMLPNDPLPHVCNWVSANGPCDKRFSSSEELLNHLRTHTAFTGTEKLISGYPSSSSLASAAAAAMACHMHMPPSGAPGSPGTLALRSPHHALGLSSRYHPYSKSPLPTPGAPVPVPAATGPYYSPYALYGQRLTTASALGYQ</sequence>
<reference key="1">
    <citation type="journal article" date="2004" name="J. Biol. Chem.">
        <title>Isolation of nlz2 and characterization of essential domains in Nlz family proteins.</title>
        <authorList>
            <person name="Runko A.P."/>
            <person name="Sagerstroem C.G."/>
        </authorList>
    </citation>
    <scope>NUCLEOTIDE SEQUENCE [MRNA]</scope>
    <scope>FUNCTION</scope>
    <scope>INTERACTION WITH NLZ1</scope>
    <scope>SUBCELLULAR LOCATION</scope>
    <scope>DEVELOPMENTAL STAGE</scope>
    <source>
        <tissue>Embryo</tissue>
    </source>
</reference>
<reference key="2">
    <citation type="submission" date="2003-01" db="EMBL/GenBank/DDBJ databases">
        <authorList>
            <consortium name="NIH - Zebrafish Gene Collection (ZGC) project"/>
        </authorList>
    </citation>
    <scope>NUCLEOTIDE SEQUENCE [LARGE SCALE MRNA]</scope>
    <source>
        <strain>AB</strain>
    </source>
</reference>
<reference key="3">
    <citation type="journal article" date="2004" name="Dev. Dyn.">
        <title>nlz gene family is required for hindbrain patterning in the zebrafish.</title>
        <authorList>
            <person name="Hoyle J."/>
            <person name="Tang Y.P."/>
            <person name="Wiellette E.L."/>
            <person name="Wardle F.C."/>
            <person name="Sive H."/>
        </authorList>
    </citation>
    <scope>FUNCTION</scope>
    <scope>DEVELOPMENTAL STAGE</scope>
</reference>
<name>ZN503_DANRE</name>
<feature type="chain" id="PRO_0000292206" description="Zinc finger protein 503">
    <location>
        <begin position="1"/>
        <end position="563"/>
    </location>
</feature>
<feature type="zinc finger region" description="C2H2-type" evidence="1">
    <location>
        <begin position="431"/>
        <end position="459"/>
    </location>
</feature>
<feature type="region of interest" description="Disordered" evidence="2">
    <location>
        <begin position="1"/>
        <end position="48"/>
    </location>
</feature>
<feature type="region of interest" description="Disordered" evidence="2">
    <location>
        <begin position="101"/>
        <end position="226"/>
    </location>
</feature>
<feature type="compositionally biased region" description="Polar residues" evidence="2">
    <location>
        <begin position="1"/>
        <end position="10"/>
    </location>
</feature>
<feature type="compositionally biased region" description="Low complexity" evidence="2">
    <location>
        <begin position="19"/>
        <end position="33"/>
    </location>
</feature>
<feature type="compositionally biased region" description="Low complexity" evidence="2">
    <location>
        <begin position="112"/>
        <end position="122"/>
    </location>
</feature>
<feature type="compositionally biased region" description="Polar residues" evidence="2">
    <location>
        <begin position="174"/>
        <end position="194"/>
    </location>
</feature>
<feature type="compositionally biased region" description="Basic and acidic residues" evidence="2">
    <location>
        <begin position="199"/>
        <end position="211"/>
    </location>
</feature>
<feature type="compositionally biased region" description="Polar residues" evidence="2">
    <location>
        <begin position="212"/>
        <end position="226"/>
    </location>
</feature>
<feature type="sequence conflict" description="In Ref. 2; AAH44193." evidence="5" ref="2">
    <original>P</original>
    <variation>L</variation>
    <location>
        <position position="131"/>
    </location>
</feature>
<feature type="sequence conflict" description="In Ref. 2; AAH44193." evidence="5" ref="2">
    <original>N</original>
    <variation>D</variation>
    <location>
        <position position="242"/>
    </location>
</feature>